<reference key="1">
    <citation type="journal article" date="1995" name="Biochem. J.">
        <title>Cloning and expression of cDNAs for the beta subunit of eukaryotic initiation factor-2B, the guanine nucleotide exchange factor for eukaryotic initiation factor-2.</title>
        <authorList>
            <person name="Craddock B.L."/>
            <person name="Price N.T."/>
            <person name="Proud C.G."/>
        </authorList>
    </citation>
    <scope>NUCLEOTIDE SEQUENCE [MRNA]</scope>
    <scope>PARTIAL PROTEIN SEQUENCE</scope>
    <source>
        <strain>New Zealand white</strain>
        <tissue>Liver</tissue>
    </source>
</reference>
<protein>
    <recommendedName>
        <fullName>Translation initiation factor eIF2B subunit beta</fullName>
    </recommendedName>
    <alternativeName>
        <fullName>eIF2B GDP-GTP exchange factor subunit beta</fullName>
    </alternativeName>
</protein>
<comment type="function">
    <text evidence="1">Acts as a component of the translation initiation factor 2B (eIF2B) complex, which catalyzes the exchange of GDP for GTP on eukaryotic initiation factor 2 (eIF2) gamma subunit. Its guanine nucleotide exchange factor activity is repressed when bound to eIF2 complex phosphorylated on the alpha subunit, thereby limiting the amount of methionyl-initiator methionine tRNA available to the ribosome and consequently global translation is repressed.</text>
</comment>
<comment type="activity regulation">
    <text evidence="1">Activated by the chemical integrated stress response (ISR) inhibitor ISRIB which stimulates guanine nucleotide exchange factor activity for both phosphorylated and unphosphorylated eIF2.</text>
</comment>
<comment type="subunit">
    <text evidence="1">Component of the translation initiation factor 2B (eIF2B) complex which is a heterodecamer of two sets of five different subunits: alpha, beta, gamma, delta and epsilon. Subunits alpha, beta and delta comprise a regulatory subcomplex and subunits epsilon and gamma comprise a catalytic subcomplex. Within the complex, the hexameric regulatory complex resides at the center, with the two heterodimeric catalytic subcomplexes bound on opposite sides.</text>
</comment>
<comment type="subcellular location">
    <subcellularLocation>
        <location evidence="2">Cytoplasm</location>
        <location evidence="2">Cytosol</location>
    </subcellularLocation>
</comment>
<comment type="similarity">
    <text evidence="3">Belongs to the eIF-2B alpha/beta/delta subunits family.</text>
</comment>
<accession>Q28690</accession>
<name>EI2BB_RABIT</name>
<gene>
    <name type="primary">EIF2B2</name>
    <name type="synonym">EIF2BB</name>
</gene>
<evidence type="ECO:0000250" key="1">
    <source>
        <dbReference type="UniProtKB" id="P49770"/>
    </source>
</evidence>
<evidence type="ECO:0000250" key="2">
    <source>
        <dbReference type="UniProtKB" id="Q9UT76"/>
    </source>
</evidence>
<evidence type="ECO:0000305" key="3"/>
<keyword id="KW-0963">Cytoplasm</keyword>
<keyword id="KW-0903">Direct protein sequencing</keyword>
<keyword id="KW-0396">Initiation factor</keyword>
<keyword id="KW-0648">Protein biosynthesis</keyword>
<keyword id="KW-1185">Reference proteome</keyword>
<dbReference type="EMBL" id="Z48222">
    <property type="protein sequence ID" value="CAA88255.1"/>
    <property type="molecule type" value="mRNA"/>
</dbReference>
<dbReference type="PIR" id="S56172">
    <property type="entry name" value="S56172"/>
</dbReference>
<dbReference type="RefSeq" id="NP_001076100.1">
    <property type="nucleotide sequence ID" value="NM_001082631.1"/>
</dbReference>
<dbReference type="SMR" id="Q28690"/>
<dbReference type="FunCoup" id="Q28690">
    <property type="interactions" value="790"/>
</dbReference>
<dbReference type="IntAct" id="Q28690">
    <property type="interactions" value="2"/>
</dbReference>
<dbReference type="STRING" id="9986.ENSOCUP00000008770"/>
<dbReference type="PaxDb" id="9986-ENSOCUP00000008770"/>
<dbReference type="GeneID" id="100009318"/>
<dbReference type="KEGG" id="ocu:100009318"/>
<dbReference type="CTD" id="8892"/>
<dbReference type="eggNOG" id="KOG1465">
    <property type="taxonomic scope" value="Eukaryota"/>
</dbReference>
<dbReference type="InParanoid" id="Q28690"/>
<dbReference type="OrthoDB" id="269919at2759"/>
<dbReference type="Proteomes" id="UP000001811">
    <property type="component" value="Unplaced"/>
</dbReference>
<dbReference type="GO" id="GO:0005737">
    <property type="term" value="C:cytoplasm"/>
    <property type="evidence" value="ECO:0000250"/>
    <property type="project" value="UniProtKB"/>
</dbReference>
<dbReference type="GO" id="GO:0005829">
    <property type="term" value="C:cytosol"/>
    <property type="evidence" value="ECO:0007669"/>
    <property type="project" value="UniProtKB-SubCell"/>
</dbReference>
<dbReference type="GO" id="GO:0005851">
    <property type="term" value="C:eukaryotic translation initiation factor 2B complex"/>
    <property type="evidence" value="ECO:0000250"/>
    <property type="project" value="UniProtKB"/>
</dbReference>
<dbReference type="GO" id="GO:0005524">
    <property type="term" value="F:ATP binding"/>
    <property type="evidence" value="ECO:0000250"/>
    <property type="project" value="UniProtKB"/>
</dbReference>
<dbReference type="GO" id="GO:0005525">
    <property type="term" value="F:GTP binding"/>
    <property type="evidence" value="ECO:0000250"/>
    <property type="project" value="UniProtKB"/>
</dbReference>
<dbReference type="GO" id="GO:0005085">
    <property type="term" value="F:guanyl-nucleotide exchange factor activity"/>
    <property type="evidence" value="ECO:0000250"/>
    <property type="project" value="UniProtKB"/>
</dbReference>
<dbReference type="GO" id="GO:0003743">
    <property type="term" value="F:translation initiation factor activity"/>
    <property type="evidence" value="ECO:0007669"/>
    <property type="project" value="UniProtKB-KW"/>
</dbReference>
<dbReference type="GO" id="GO:0007417">
    <property type="term" value="P:central nervous system development"/>
    <property type="evidence" value="ECO:0000250"/>
    <property type="project" value="UniProtKB"/>
</dbReference>
<dbReference type="GO" id="GO:0002183">
    <property type="term" value="P:cytoplasmic translational initiation"/>
    <property type="evidence" value="ECO:0000250"/>
    <property type="project" value="UniProtKB"/>
</dbReference>
<dbReference type="GO" id="GO:0042552">
    <property type="term" value="P:myelination"/>
    <property type="evidence" value="ECO:0000250"/>
    <property type="project" value="UniProtKB"/>
</dbReference>
<dbReference type="GO" id="GO:0014003">
    <property type="term" value="P:oligodendrocyte development"/>
    <property type="evidence" value="ECO:0000250"/>
    <property type="project" value="UniProtKB"/>
</dbReference>
<dbReference type="GO" id="GO:0001541">
    <property type="term" value="P:ovarian follicle development"/>
    <property type="evidence" value="ECO:0000250"/>
    <property type="project" value="UniProtKB"/>
</dbReference>
<dbReference type="GO" id="GO:0050852">
    <property type="term" value="P:T cell receptor signaling pathway"/>
    <property type="evidence" value="ECO:0000250"/>
    <property type="project" value="UniProtKB"/>
</dbReference>
<dbReference type="GO" id="GO:0006413">
    <property type="term" value="P:translational initiation"/>
    <property type="evidence" value="ECO:0000250"/>
    <property type="project" value="UniProtKB"/>
</dbReference>
<dbReference type="FunFam" id="3.40.50.10470:FF:000004">
    <property type="entry name" value="Translation initiation factor eIF-2B subunit beta"/>
    <property type="match status" value="1"/>
</dbReference>
<dbReference type="Gene3D" id="3.40.50.10470">
    <property type="entry name" value="Translation initiation factor eif-2b, domain 2"/>
    <property type="match status" value="1"/>
</dbReference>
<dbReference type="InterPro" id="IPR051855">
    <property type="entry name" value="eIF2B_beta_subunit"/>
</dbReference>
<dbReference type="InterPro" id="IPR000649">
    <property type="entry name" value="IF-2B-related"/>
</dbReference>
<dbReference type="InterPro" id="IPR042529">
    <property type="entry name" value="IF_2B-like_C"/>
</dbReference>
<dbReference type="InterPro" id="IPR037171">
    <property type="entry name" value="NagB/RpiA_transferase-like"/>
</dbReference>
<dbReference type="PANTHER" id="PTHR45859">
    <property type="entry name" value="TRANSLATION INITIATION FACTOR EIF-2B SUBUNIT BETA"/>
    <property type="match status" value="1"/>
</dbReference>
<dbReference type="PANTHER" id="PTHR45859:SF1">
    <property type="entry name" value="TRANSLATION INITIATION FACTOR EIF-2B SUBUNIT BETA"/>
    <property type="match status" value="1"/>
</dbReference>
<dbReference type="Pfam" id="PF01008">
    <property type="entry name" value="IF-2B"/>
    <property type="match status" value="1"/>
</dbReference>
<dbReference type="SUPFAM" id="SSF100950">
    <property type="entry name" value="NagB/RpiA/CoA transferase-like"/>
    <property type="match status" value="1"/>
</dbReference>
<proteinExistence type="evidence at protein level"/>
<feature type="chain" id="PRO_0000156063" description="Translation initiation factor eIF2B subunit beta">
    <location>
        <begin position="1"/>
        <end position="351"/>
    </location>
</feature>
<organism>
    <name type="scientific">Oryctolagus cuniculus</name>
    <name type="common">Rabbit</name>
    <dbReference type="NCBI Taxonomy" id="9986"/>
    <lineage>
        <taxon>Eukaryota</taxon>
        <taxon>Metazoa</taxon>
        <taxon>Chordata</taxon>
        <taxon>Craniata</taxon>
        <taxon>Vertebrata</taxon>
        <taxon>Euteleostomi</taxon>
        <taxon>Mammalia</taxon>
        <taxon>Eutheria</taxon>
        <taxon>Euarchontoglires</taxon>
        <taxon>Glires</taxon>
        <taxon>Lagomorpha</taxon>
        <taxon>Leporidae</taxon>
        <taxon>Oryctolagus</taxon>
    </lineage>
</organism>
<sequence length="351" mass="39004">MPGATEKGSELSERIESFVEALKRGGGQRSSEDMARETLGLLRRIITDHRWSNAGELMELIRREGRRMMAAQPSETTVGNMVRRVLKIIREEYGRLHGRSDESDQQESLHKLLTSGGLSEDFSFHYAQLQSNIVEAINELLVELEGTTENIAAQALEHIHSNEVIMTIGLSRTVEAFLREAARKRKFHVIVAECAPFCQGHEMAVNLSKAGIETTVMTDAAIFAVMSRVNKVIIGTKTILANGALRAVTGTHTLALAAKHHSTPLIVCAPMFKLSPQFPNEEDSFHKFVAPEEVLPFTEGDILDKVGCHCPVFDYVPPELITLFISNIGGNAPSYIYRLMSELYHPEDHVL</sequence>